<comment type="function">
    <text evidence="1">Nucleotidyltransferase involved in the post-translational modification of proteins. It can catalyze the addition of adenosine monophosphate (AMP) or uridine monophosphate (UMP) to a protein, resulting in modifications known as AMPylation and UMPylation.</text>
</comment>
<comment type="catalytic activity">
    <reaction evidence="1">
        <text>L-seryl-[protein] + ATP = 3-O-(5'-adenylyl)-L-seryl-[protein] + diphosphate</text>
        <dbReference type="Rhea" id="RHEA:58120"/>
        <dbReference type="Rhea" id="RHEA-COMP:9863"/>
        <dbReference type="Rhea" id="RHEA-COMP:15073"/>
        <dbReference type="ChEBI" id="CHEBI:29999"/>
        <dbReference type="ChEBI" id="CHEBI:30616"/>
        <dbReference type="ChEBI" id="CHEBI:33019"/>
        <dbReference type="ChEBI" id="CHEBI:142516"/>
        <dbReference type="EC" id="2.7.7.108"/>
    </reaction>
</comment>
<comment type="catalytic activity">
    <reaction evidence="1">
        <text>L-threonyl-[protein] + ATP = 3-O-(5'-adenylyl)-L-threonyl-[protein] + diphosphate</text>
        <dbReference type="Rhea" id="RHEA:54292"/>
        <dbReference type="Rhea" id="RHEA-COMP:11060"/>
        <dbReference type="Rhea" id="RHEA-COMP:13847"/>
        <dbReference type="ChEBI" id="CHEBI:30013"/>
        <dbReference type="ChEBI" id="CHEBI:30616"/>
        <dbReference type="ChEBI" id="CHEBI:33019"/>
        <dbReference type="ChEBI" id="CHEBI:138113"/>
        <dbReference type="EC" id="2.7.7.108"/>
    </reaction>
</comment>
<comment type="catalytic activity">
    <reaction evidence="1">
        <text>L-tyrosyl-[protein] + ATP = O-(5'-adenylyl)-L-tyrosyl-[protein] + diphosphate</text>
        <dbReference type="Rhea" id="RHEA:54288"/>
        <dbReference type="Rhea" id="RHEA-COMP:10136"/>
        <dbReference type="Rhea" id="RHEA-COMP:13846"/>
        <dbReference type="ChEBI" id="CHEBI:30616"/>
        <dbReference type="ChEBI" id="CHEBI:33019"/>
        <dbReference type="ChEBI" id="CHEBI:46858"/>
        <dbReference type="ChEBI" id="CHEBI:83624"/>
        <dbReference type="EC" id="2.7.7.108"/>
    </reaction>
</comment>
<comment type="catalytic activity">
    <reaction evidence="1">
        <text>L-histidyl-[protein] + UTP = N(tele)-(5'-uridylyl)-L-histidyl-[protein] + diphosphate</text>
        <dbReference type="Rhea" id="RHEA:83891"/>
        <dbReference type="Rhea" id="RHEA-COMP:9745"/>
        <dbReference type="Rhea" id="RHEA-COMP:20239"/>
        <dbReference type="ChEBI" id="CHEBI:29979"/>
        <dbReference type="ChEBI" id="CHEBI:33019"/>
        <dbReference type="ChEBI" id="CHEBI:46398"/>
        <dbReference type="ChEBI" id="CHEBI:233474"/>
    </reaction>
</comment>
<comment type="catalytic activity">
    <reaction evidence="1">
        <text>L-seryl-[protein] + UTP = O-(5'-uridylyl)-L-seryl-[protein] + diphosphate</text>
        <dbReference type="Rhea" id="RHEA:64604"/>
        <dbReference type="Rhea" id="RHEA-COMP:9863"/>
        <dbReference type="Rhea" id="RHEA-COMP:16635"/>
        <dbReference type="ChEBI" id="CHEBI:29999"/>
        <dbReference type="ChEBI" id="CHEBI:33019"/>
        <dbReference type="ChEBI" id="CHEBI:46398"/>
        <dbReference type="ChEBI" id="CHEBI:156051"/>
    </reaction>
</comment>
<comment type="catalytic activity">
    <reaction evidence="1">
        <text>L-tyrosyl-[protein] + UTP = O-(5'-uridylyl)-L-tyrosyl-[protein] + diphosphate</text>
        <dbReference type="Rhea" id="RHEA:83887"/>
        <dbReference type="Rhea" id="RHEA-COMP:10136"/>
        <dbReference type="Rhea" id="RHEA-COMP:20238"/>
        <dbReference type="ChEBI" id="CHEBI:33019"/>
        <dbReference type="ChEBI" id="CHEBI:46398"/>
        <dbReference type="ChEBI" id="CHEBI:46858"/>
        <dbReference type="ChEBI" id="CHEBI:90602"/>
    </reaction>
</comment>
<comment type="cofactor">
    <cofactor evidence="1">
        <name>Mg(2+)</name>
        <dbReference type="ChEBI" id="CHEBI:18420"/>
    </cofactor>
    <cofactor evidence="1">
        <name>Mn(2+)</name>
        <dbReference type="ChEBI" id="CHEBI:29035"/>
    </cofactor>
</comment>
<comment type="similarity">
    <text evidence="1">Belongs to the SELO family.</text>
</comment>
<sequence length="495" mass="54110">MKWLRLQDLPTDNSFAALPAEFYTRLQPRPPAAPRLLHANAEAAALIGLDPAEFSTQAFLDVFSGHAPLPGGDTLAAVYSGHQFGVWAGQLGDGRAHLLGEVRGPAGGWELQLKGAGMTPYSRMGDGRAVLRSSVREYLASEAMHGLGIPTTRSLALVVSDDPVMRETVETAAVVTRMAPSFVRFGSFEHWSARRQPEQLRVLADYVIDRFYPECRVAGAGRLDGEHGEILGLLAAVTRRTALLMADWQAVGFCHGVMNTDNMSILGLTLDYGPYGFMDTFQLGHICNHSDSEGRYAWNRQPSVGLWNLYRLASSLHTLAPDPEALRAVLDGYEAVFTQAFHGRMAGKLGLPQFLPEDETLLDDLLQLMHQQGADFTLAFRRLGEAVRGQRQPFEDLFIDRAAAGAWYDRLAARHASDGRAAQARAAAMDEVNPLYVLRNHLAEQAIRAAARGDAGEIDILLKLLRNPYKQQPGYDAYAGLAPDWAAGLEVSCSS</sequence>
<dbReference type="EC" id="2.7.7.-" evidence="1"/>
<dbReference type="EC" id="2.7.7.108" evidence="1"/>
<dbReference type="EMBL" id="BX640428">
    <property type="protein sequence ID" value="CAE37219.1"/>
    <property type="molecule type" value="Genomic_DNA"/>
</dbReference>
<dbReference type="RefSeq" id="WP_003812698.1">
    <property type="nucleotide sequence ID" value="NC_002928.3"/>
</dbReference>
<dbReference type="SMR" id="Q7W954"/>
<dbReference type="KEGG" id="bpa:BPP1919"/>
<dbReference type="HOGENOM" id="CLU_010245_4_0_4"/>
<dbReference type="Proteomes" id="UP000001421">
    <property type="component" value="Chromosome"/>
</dbReference>
<dbReference type="GO" id="GO:0070733">
    <property type="term" value="F:AMPylase activity"/>
    <property type="evidence" value="ECO:0007669"/>
    <property type="project" value="RHEA"/>
</dbReference>
<dbReference type="GO" id="GO:0005524">
    <property type="term" value="F:ATP binding"/>
    <property type="evidence" value="ECO:0007669"/>
    <property type="project" value="UniProtKB-UniRule"/>
</dbReference>
<dbReference type="GO" id="GO:0000287">
    <property type="term" value="F:magnesium ion binding"/>
    <property type="evidence" value="ECO:0007669"/>
    <property type="project" value="UniProtKB-UniRule"/>
</dbReference>
<dbReference type="HAMAP" id="MF_00692">
    <property type="entry name" value="YdiU_SelO"/>
    <property type="match status" value="1"/>
</dbReference>
<dbReference type="InterPro" id="IPR003846">
    <property type="entry name" value="SelO"/>
</dbReference>
<dbReference type="NCBIfam" id="NF000658">
    <property type="entry name" value="PRK00029.1"/>
    <property type="match status" value="1"/>
</dbReference>
<dbReference type="PANTHER" id="PTHR32057">
    <property type="entry name" value="PROTEIN ADENYLYLTRANSFERASE SELO, MITOCHONDRIAL"/>
    <property type="match status" value="1"/>
</dbReference>
<dbReference type="PANTHER" id="PTHR32057:SF14">
    <property type="entry name" value="PROTEIN ADENYLYLTRANSFERASE SELO, MITOCHONDRIAL"/>
    <property type="match status" value="1"/>
</dbReference>
<dbReference type="Pfam" id="PF02696">
    <property type="entry name" value="SelO"/>
    <property type="match status" value="1"/>
</dbReference>
<gene>
    <name evidence="1" type="primary">ydiU</name>
    <name evidence="1" type="synonym">selO</name>
    <name type="ordered locus">BPP1919</name>
</gene>
<accession>Q7W954</accession>
<reference key="1">
    <citation type="journal article" date="2003" name="Nat. Genet.">
        <title>Comparative analysis of the genome sequences of Bordetella pertussis, Bordetella parapertussis and Bordetella bronchiseptica.</title>
        <authorList>
            <person name="Parkhill J."/>
            <person name="Sebaihia M."/>
            <person name="Preston A."/>
            <person name="Murphy L.D."/>
            <person name="Thomson N.R."/>
            <person name="Harris D.E."/>
            <person name="Holden M.T.G."/>
            <person name="Churcher C.M."/>
            <person name="Bentley S.D."/>
            <person name="Mungall K.L."/>
            <person name="Cerdeno-Tarraga A.-M."/>
            <person name="Temple L."/>
            <person name="James K.D."/>
            <person name="Harris B."/>
            <person name="Quail M.A."/>
            <person name="Achtman M."/>
            <person name="Atkin R."/>
            <person name="Baker S."/>
            <person name="Basham D."/>
            <person name="Bason N."/>
            <person name="Cherevach I."/>
            <person name="Chillingworth T."/>
            <person name="Collins M."/>
            <person name="Cronin A."/>
            <person name="Davis P."/>
            <person name="Doggett J."/>
            <person name="Feltwell T."/>
            <person name="Goble A."/>
            <person name="Hamlin N."/>
            <person name="Hauser H."/>
            <person name="Holroyd S."/>
            <person name="Jagels K."/>
            <person name="Leather S."/>
            <person name="Moule S."/>
            <person name="Norberczak H."/>
            <person name="O'Neil S."/>
            <person name="Ormond D."/>
            <person name="Price C."/>
            <person name="Rabbinowitsch E."/>
            <person name="Rutter S."/>
            <person name="Sanders M."/>
            <person name="Saunders D."/>
            <person name="Seeger K."/>
            <person name="Sharp S."/>
            <person name="Simmonds M."/>
            <person name="Skelton J."/>
            <person name="Squares R."/>
            <person name="Squares S."/>
            <person name="Stevens K."/>
            <person name="Unwin L."/>
            <person name="Whitehead S."/>
            <person name="Barrell B.G."/>
            <person name="Maskell D.J."/>
        </authorList>
    </citation>
    <scope>NUCLEOTIDE SEQUENCE [LARGE SCALE GENOMIC DNA]</scope>
    <source>
        <strain>12822 / ATCC BAA-587 / NCTC 13253</strain>
    </source>
</reference>
<feature type="chain" id="PRO_0000121409" description="Protein nucleotidyltransferase YdiU">
    <location>
        <begin position="1"/>
        <end position="495"/>
    </location>
</feature>
<feature type="active site" description="Proton acceptor" evidence="1">
    <location>
        <position position="261"/>
    </location>
</feature>
<feature type="binding site" evidence="1">
    <location>
        <position position="92"/>
    </location>
    <ligand>
        <name>ATP</name>
        <dbReference type="ChEBI" id="CHEBI:30616"/>
    </ligand>
</feature>
<feature type="binding site" evidence="1">
    <location>
        <position position="94"/>
    </location>
    <ligand>
        <name>ATP</name>
        <dbReference type="ChEBI" id="CHEBI:30616"/>
    </ligand>
</feature>
<feature type="binding site" evidence="1">
    <location>
        <position position="95"/>
    </location>
    <ligand>
        <name>ATP</name>
        <dbReference type="ChEBI" id="CHEBI:30616"/>
    </ligand>
</feature>
<feature type="binding site" evidence="1">
    <location>
        <position position="114"/>
    </location>
    <ligand>
        <name>ATP</name>
        <dbReference type="ChEBI" id="CHEBI:30616"/>
    </ligand>
</feature>
<feature type="binding site" evidence="1">
    <location>
        <position position="126"/>
    </location>
    <ligand>
        <name>ATP</name>
        <dbReference type="ChEBI" id="CHEBI:30616"/>
    </ligand>
</feature>
<feature type="binding site" evidence="1">
    <location>
        <position position="127"/>
    </location>
    <ligand>
        <name>ATP</name>
        <dbReference type="ChEBI" id="CHEBI:30616"/>
    </ligand>
</feature>
<feature type="binding site" evidence="1">
    <location>
        <position position="177"/>
    </location>
    <ligand>
        <name>ATP</name>
        <dbReference type="ChEBI" id="CHEBI:30616"/>
    </ligand>
</feature>
<feature type="binding site" evidence="1">
    <location>
        <position position="184"/>
    </location>
    <ligand>
        <name>ATP</name>
        <dbReference type="ChEBI" id="CHEBI:30616"/>
    </ligand>
</feature>
<feature type="binding site" evidence="1">
    <location>
        <position position="262"/>
    </location>
    <ligand>
        <name>Mg(2+)</name>
        <dbReference type="ChEBI" id="CHEBI:18420"/>
    </ligand>
</feature>
<feature type="binding site" evidence="1">
    <location>
        <position position="271"/>
    </location>
    <ligand>
        <name>ATP</name>
        <dbReference type="ChEBI" id="CHEBI:30616"/>
    </ligand>
</feature>
<feature type="binding site" evidence="1">
    <location>
        <position position="271"/>
    </location>
    <ligand>
        <name>Mg(2+)</name>
        <dbReference type="ChEBI" id="CHEBI:18420"/>
    </ligand>
</feature>
<name>SELO_BORPA</name>
<proteinExistence type="inferred from homology"/>
<keyword id="KW-0067">ATP-binding</keyword>
<keyword id="KW-0460">Magnesium</keyword>
<keyword id="KW-0464">Manganese</keyword>
<keyword id="KW-0479">Metal-binding</keyword>
<keyword id="KW-0547">Nucleotide-binding</keyword>
<keyword id="KW-0548">Nucleotidyltransferase</keyword>
<keyword id="KW-0808">Transferase</keyword>
<protein>
    <recommendedName>
        <fullName evidence="1">Protein nucleotidyltransferase YdiU</fullName>
        <ecNumber evidence="1">2.7.7.-</ecNumber>
    </recommendedName>
    <alternativeName>
        <fullName evidence="1">Protein adenylyltransferase YdiU</fullName>
        <ecNumber evidence="1">2.7.7.108</ecNumber>
    </alternativeName>
    <alternativeName>
        <fullName evidence="1">Protein uridylyltransferase YdiU</fullName>
        <ecNumber evidence="1">2.7.7.-</ecNumber>
    </alternativeName>
</protein>
<organism>
    <name type="scientific">Bordetella parapertussis (strain 12822 / ATCC BAA-587 / NCTC 13253)</name>
    <dbReference type="NCBI Taxonomy" id="257311"/>
    <lineage>
        <taxon>Bacteria</taxon>
        <taxon>Pseudomonadati</taxon>
        <taxon>Pseudomonadota</taxon>
        <taxon>Betaproteobacteria</taxon>
        <taxon>Burkholderiales</taxon>
        <taxon>Alcaligenaceae</taxon>
        <taxon>Bordetella</taxon>
    </lineage>
</organism>
<evidence type="ECO:0000255" key="1">
    <source>
        <dbReference type="HAMAP-Rule" id="MF_00692"/>
    </source>
</evidence>